<protein>
    <recommendedName>
        <fullName>Uroplakin-3b</fullName>
        <shortName>UP3b</shortName>
    </recommendedName>
    <alternativeName>
        <fullName>Uroplakin IIIb</fullName>
        <shortName>UPIIIb</shortName>
    </alternativeName>
    <alternativeName>
        <fullName>p35</fullName>
    </alternativeName>
</protein>
<accession>Q9BT76</accession>
<accession>A6NHH5</accession>
<accession>A8K231</accession>
<accession>A8MZA8</accession>
<accession>B3KPU5</accession>
<accession>Q75MM5</accession>
<accession>Q86W06</accession>
<comment type="function">
    <text evidence="1">Component of the asymmetric unit membrane (AUM); a highly specialized biomembrane elaborated by terminally differentiated urothelial cells. May play an important role in AUM-cytoskeleton interaction in terminally differentiated urothelial cells. It also contributes to the formation of urothelial glycocalyx which may play an important role in preventing bacterial adherence (By similarity).</text>
</comment>
<comment type="subunit">
    <text>Heterodimer with uroplakin-1B (UPK1B).</text>
</comment>
<comment type="subcellular location">
    <subcellularLocation>
        <location evidence="9">Cell membrane</location>
        <topology evidence="9">Single-pass type I membrane protein</topology>
    </subcellularLocation>
    <text evidence="4">Heterodimer formation with UPK1B is a prerequisite to exit out of the endoplasmic reticulum (ER).</text>
</comment>
<comment type="alternative products">
    <event type="alternative splicing"/>
    <isoform>
        <id>Q9BT76-1</id>
        <name>1</name>
        <sequence type="displayed"/>
    </isoform>
    <isoform>
        <id>Q9BT76-2</id>
        <name>2</name>
        <sequence type="described" ref="VSP_037327"/>
    </isoform>
    <isoform>
        <id>Q9BT76-3</id>
        <name>3</name>
        <sequence type="described" ref="VSP_037327 VSP_054295"/>
    </isoform>
</comment>
<comment type="similarity">
    <text evidence="9">Belongs to the uroplakin-3 family.</text>
</comment>
<comment type="sequence caution" evidence="9">
    <conflict type="frameshift">
        <sequence resource="EMBL-CDS" id="AAO89507"/>
    </conflict>
</comment>
<comment type="sequence caution" evidence="9">
    <conflict type="erroneous gene model prediction">
        <sequence resource="EMBL-CDS" id="AAS07526"/>
    </conflict>
</comment>
<reference key="1">
    <citation type="journal article" date="2002" name="J. Cell Biol.">
        <title>Uroplakin IIIb, a urothelial differentiation marker, dimerizes with uroplakin Ib as an early step of urothelial plaque assembly.</title>
        <authorList>
            <person name="Deng F.-M."/>
            <person name="Liang F.-X."/>
            <person name="Tu L."/>
            <person name="Resing K.A."/>
            <person name="Hu P."/>
            <person name="Supino M."/>
            <person name="Hu C.-C.A."/>
            <person name="Zhou G."/>
            <person name="Ding M."/>
            <person name="Kreibich G."/>
            <person name="Sun T.-T."/>
        </authorList>
    </citation>
    <scope>NUCLEOTIDE SEQUENCE [MRNA] (ISOFORM 2)</scope>
    <scope>INTERACTION WITH UPK1B</scope>
    <scope>SUBCELLULAR LOCATION</scope>
    <scope>VARIANT ARG-319</scope>
</reference>
<reference key="2">
    <citation type="journal article" date="2004" name="Nat. Genet.">
        <title>Complete sequencing and characterization of 21,243 full-length human cDNAs.</title>
        <authorList>
            <person name="Ota T."/>
            <person name="Suzuki Y."/>
            <person name="Nishikawa T."/>
            <person name="Otsuki T."/>
            <person name="Sugiyama T."/>
            <person name="Irie R."/>
            <person name="Wakamatsu A."/>
            <person name="Hayashi K."/>
            <person name="Sato H."/>
            <person name="Nagai K."/>
            <person name="Kimura K."/>
            <person name="Makita H."/>
            <person name="Sekine M."/>
            <person name="Obayashi M."/>
            <person name="Nishi T."/>
            <person name="Shibahara T."/>
            <person name="Tanaka T."/>
            <person name="Ishii S."/>
            <person name="Yamamoto J."/>
            <person name="Saito K."/>
            <person name="Kawai Y."/>
            <person name="Isono Y."/>
            <person name="Nakamura Y."/>
            <person name="Nagahari K."/>
            <person name="Murakami K."/>
            <person name="Yasuda T."/>
            <person name="Iwayanagi T."/>
            <person name="Wagatsuma M."/>
            <person name="Shiratori A."/>
            <person name="Sudo H."/>
            <person name="Hosoiri T."/>
            <person name="Kaku Y."/>
            <person name="Kodaira H."/>
            <person name="Kondo H."/>
            <person name="Sugawara M."/>
            <person name="Takahashi M."/>
            <person name="Kanda K."/>
            <person name="Yokoi T."/>
            <person name="Furuya T."/>
            <person name="Kikkawa E."/>
            <person name="Omura Y."/>
            <person name="Abe K."/>
            <person name="Kamihara K."/>
            <person name="Katsuta N."/>
            <person name="Sato K."/>
            <person name="Tanikawa M."/>
            <person name="Yamazaki M."/>
            <person name="Ninomiya K."/>
            <person name="Ishibashi T."/>
            <person name="Yamashita H."/>
            <person name="Murakawa K."/>
            <person name="Fujimori K."/>
            <person name="Tanai H."/>
            <person name="Kimata M."/>
            <person name="Watanabe M."/>
            <person name="Hiraoka S."/>
            <person name="Chiba Y."/>
            <person name="Ishida S."/>
            <person name="Ono Y."/>
            <person name="Takiguchi S."/>
            <person name="Watanabe S."/>
            <person name="Yosida M."/>
            <person name="Hotuta T."/>
            <person name="Kusano J."/>
            <person name="Kanehori K."/>
            <person name="Takahashi-Fujii A."/>
            <person name="Hara H."/>
            <person name="Tanase T.-O."/>
            <person name="Nomura Y."/>
            <person name="Togiya S."/>
            <person name="Komai F."/>
            <person name="Hara R."/>
            <person name="Takeuchi K."/>
            <person name="Arita M."/>
            <person name="Imose N."/>
            <person name="Musashino K."/>
            <person name="Yuuki H."/>
            <person name="Oshima A."/>
            <person name="Sasaki N."/>
            <person name="Aotsuka S."/>
            <person name="Yoshikawa Y."/>
            <person name="Matsunawa H."/>
            <person name="Ichihara T."/>
            <person name="Shiohata N."/>
            <person name="Sano S."/>
            <person name="Moriya S."/>
            <person name="Momiyama H."/>
            <person name="Satoh N."/>
            <person name="Takami S."/>
            <person name="Terashima Y."/>
            <person name="Suzuki O."/>
            <person name="Nakagawa S."/>
            <person name="Senoh A."/>
            <person name="Mizoguchi H."/>
            <person name="Goto Y."/>
            <person name="Shimizu F."/>
            <person name="Wakebe H."/>
            <person name="Hishigaki H."/>
            <person name="Watanabe T."/>
            <person name="Sugiyama A."/>
            <person name="Takemoto M."/>
            <person name="Kawakami B."/>
            <person name="Yamazaki M."/>
            <person name="Watanabe K."/>
            <person name="Kumagai A."/>
            <person name="Itakura S."/>
            <person name="Fukuzumi Y."/>
            <person name="Fujimori Y."/>
            <person name="Komiyama M."/>
            <person name="Tashiro H."/>
            <person name="Tanigami A."/>
            <person name="Fujiwara T."/>
            <person name="Ono T."/>
            <person name="Yamada K."/>
            <person name="Fujii Y."/>
            <person name="Ozaki K."/>
            <person name="Hirao M."/>
            <person name="Ohmori Y."/>
            <person name="Kawabata A."/>
            <person name="Hikiji T."/>
            <person name="Kobatake N."/>
            <person name="Inagaki H."/>
            <person name="Ikema Y."/>
            <person name="Okamoto S."/>
            <person name="Okitani R."/>
            <person name="Kawakami T."/>
            <person name="Noguchi S."/>
            <person name="Itoh T."/>
            <person name="Shigeta K."/>
            <person name="Senba T."/>
            <person name="Matsumura K."/>
            <person name="Nakajima Y."/>
            <person name="Mizuno T."/>
            <person name="Morinaga M."/>
            <person name="Sasaki M."/>
            <person name="Togashi T."/>
            <person name="Oyama M."/>
            <person name="Hata H."/>
            <person name="Watanabe M."/>
            <person name="Komatsu T."/>
            <person name="Mizushima-Sugano J."/>
            <person name="Satoh T."/>
            <person name="Shirai Y."/>
            <person name="Takahashi Y."/>
            <person name="Nakagawa K."/>
            <person name="Okumura K."/>
            <person name="Nagase T."/>
            <person name="Nomura N."/>
            <person name="Kikuchi H."/>
            <person name="Masuho Y."/>
            <person name="Yamashita R."/>
            <person name="Nakai K."/>
            <person name="Yada T."/>
            <person name="Nakamura Y."/>
            <person name="Ohara O."/>
            <person name="Isogai T."/>
            <person name="Sugano S."/>
        </authorList>
    </citation>
    <scope>NUCLEOTIDE SEQUENCE [LARGE SCALE MRNA] (ISOFORMS 1 AND 2)</scope>
    <scope>VARIANT ARG-319</scope>
    <source>
        <tissue>Placenta</tissue>
        <tissue>Subthalamic nucleus</tissue>
    </source>
</reference>
<reference key="3">
    <citation type="journal article" date="2003" name="Nature">
        <title>The DNA sequence of human chromosome 7.</title>
        <authorList>
            <person name="Hillier L.W."/>
            <person name="Fulton R.S."/>
            <person name="Fulton L.A."/>
            <person name="Graves T.A."/>
            <person name="Pepin K.H."/>
            <person name="Wagner-McPherson C."/>
            <person name="Layman D."/>
            <person name="Maas J."/>
            <person name="Jaeger S."/>
            <person name="Walker R."/>
            <person name="Wylie K."/>
            <person name="Sekhon M."/>
            <person name="Becker M.C."/>
            <person name="O'Laughlin M.D."/>
            <person name="Schaller M.E."/>
            <person name="Fewell G.A."/>
            <person name="Delehaunty K.D."/>
            <person name="Miner T.L."/>
            <person name="Nash W.E."/>
            <person name="Cordes M."/>
            <person name="Du H."/>
            <person name="Sun H."/>
            <person name="Edwards J."/>
            <person name="Bradshaw-Cordum H."/>
            <person name="Ali J."/>
            <person name="Andrews S."/>
            <person name="Isak A."/>
            <person name="Vanbrunt A."/>
            <person name="Nguyen C."/>
            <person name="Du F."/>
            <person name="Lamar B."/>
            <person name="Courtney L."/>
            <person name="Kalicki J."/>
            <person name="Ozersky P."/>
            <person name="Bielicki L."/>
            <person name="Scott K."/>
            <person name="Holmes A."/>
            <person name="Harkins R."/>
            <person name="Harris A."/>
            <person name="Strong C.M."/>
            <person name="Hou S."/>
            <person name="Tomlinson C."/>
            <person name="Dauphin-Kohlberg S."/>
            <person name="Kozlowicz-Reilly A."/>
            <person name="Leonard S."/>
            <person name="Rohlfing T."/>
            <person name="Rock S.M."/>
            <person name="Tin-Wollam A.-M."/>
            <person name="Abbott A."/>
            <person name="Minx P."/>
            <person name="Maupin R."/>
            <person name="Strowmatt C."/>
            <person name="Latreille P."/>
            <person name="Miller N."/>
            <person name="Johnson D."/>
            <person name="Murray J."/>
            <person name="Woessner J.P."/>
            <person name="Wendl M.C."/>
            <person name="Yang S.-P."/>
            <person name="Schultz B.R."/>
            <person name="Wallis J.W."/>
            <person name="Spieth J."/>
            <person name="Bieri T.A."/>
            <person name="Nelson J.O."/>
            <person name="Berkowicz N."/>
            <person name="Wohldmann P.E."/>
            <person name="Cook L.L."/>
            <person name="Hickenbotham M.T."/>
            <person name="Eldred J."/>
            <person name="Williams D."/>
            <person name="Bedell J.A."/>
            <person name="Mardis E.R."/>
            <person name="Clifton S.W."/>
            <person name="Chissoe S.L."/>
            <person name="Marra M.A."/>
            <person name="Raymond C."/>
            <person name="Haugen E."/>
            <person name="Gillett W."/>
            <person name="Zhou Y."/>
            <person name="James R."/>
            <person name="Phelps K."/>
            <person name="Iadanoto S."/>
            <person name="Bubb K."/>
            <person name="Simms E."/>
            <person name="Levy R."/>
            <person name="Clendenning J."/>
            <person name="Kaul R."/>
            <person name="Kent W.J."/>
            <person name="Furey T.S."/>
            <person name="Baertsch R.A."/>
            <person name="Brent M.R."/>
            <person name="Keibler E."/>
            <person name="Flicek P."/>
            <person name="Bork P."/>
            <person name="Suyama M."/>
            <person name="Bailey J.A."/>
            <person name="Portnoy M.E."/>
            <person name="Torrents D."/>
            <person name="Chinwalla A.T."/>
            <person name="Gish W.R."/>
            <person name="Eddy S.R."/>
            <person name="McPherson J.D."/>
            <person name="Olson M.V."/>
            <person name="Eichler E.E."/>
            <person name="Green E.D."/>
            <person name="Waterston R.H."/>
            <person name="Wilson R.K."/>
        </authorList>
    </citation>
    <scope>NUCLEOTIDE SEQUENCE [LARGE SCALE GENOMIC DNA]</scope>
</reference>
<reference key="4">
    <citation type="journal article" date="2004" name="Genome Res.">
        <title>The status, quality, and expansion of the NIH full-length cDNA project: the Mammalian Gene Collection (MGC).</title>
        <authorList>
            <consortium name="The MGC Project Team"/>
        </authorList>
    </citation>
    <scope>NUCLEOTIDE SEQUENCE [LARGE SCALE MRNA] (ISOFORM 1)</scope>
    <scope>VARIANT ARG-319</scope>
    <source>
        <tissue>Uterus</tissue>
    </source>
</reference>
<dbReference type="EMBL" id="AY233462">
    <property type="protein sequence ID" value="AAO89507.1"/>
    <property type="status" value="ALT_FRAME"/>
    <property type="molecule type" value="mRNA"/>
</dbReference>
<dbReference type="EMBL" id="AK056760">
    <property type="protein sequence ID" value="BAG51807.1"/>
    <property type="molecule type" value="mRNA"/>
</dbReference>
<dbReference type="EMBL" id="AK290096">
    <property type="protein sequence ID" value="BAF82785.1"/>
    <property type="molecule type" value="mRNA"/>
</dbReference>
<dbReference type="EMBL" id="AC004980">
    <property type="status" value="NOT_ANNOTATED_CDS"/>
    <property type="molecule type" value="Genomic_DNA"/>
</dbReference>
<dbReference type="EMBL" id="AC006972">
    <property type="status" value="NOT_ANNOTATED_CDS"/>
    <property type="molecule type" value="Genomic_DNA"/>
</dbReference>
<dbReference type="EMBL" id="AC007003">
    <property type="status" value="NOT_ANNOTATED_CDS"/>
    <property type="molecule type" value="Genomic_DNA"/>
</dbReference>
<dbReference type="EMBL" id="AC114737">
    <property type="status" value="NOT_ANNOTATED_CDS"/>
    <property type="molecule type" value="Genomic_DNA"/>
</dbReference>
<dbReference type="EMBL" id="AC007078">
    <property type="protein sequence ID" value="AAS07526.1"/>
    <property type="status" value="ALT_SEQ"/>
    <property type="molecule type" value="Genomic_DNA"/>
</dbReference>
<dbReference type="EMBL" id="BC004304">
    <property type="protein sequence ID" value="AAH04304.1"/>
    <property type="molecule type" value="mRNA"/>
</dbReference>
<dbReference type="CCDS" id="CCDS87512.1">
    <molecule id="Q9BT76-3"/>
</dbReference>
<dbReference type="RefSeq" id="NP_001334613.1">
    <molecule id="Q9BT76-3"/>
    <property type="nucleotide sequence ID" value="NM_001347684.2"/>
</dbReference>
<dbReference type="RefSeq" id="NP_085047.1">
    <property type="nucleotide sequence ID" value="NM_030570.3"/>
</dbReference>
<dbReference type="RefSeq" id="NP_872624.1">
    <property type="nucleotide sequence ID" value="NM_182683.2"/>
</dbReference>
<dbReference type="RefSeq" id="NP_872625.1">
    <property type="nucleotide sequence ID" value="NM_182684.2"/>
</dbReference>
<dbReference type="RefSeq" id="XP_005250669.1">
    <property type="nucleotide sequence ID" value="XM_005250612.3"/>
</dbReference>
<dbReference type="RefSeq" id="XP_006716203.1">
    <property type="nucleotide sequence ID" value="XM_006716140.3"/>
</dbReference>
<dbReference type="RefSeq" id="XP_006716204.1">
    <property type="nucleotide sequence ID" value="XM_006716141.3"/>
</dbReference>
<dbReference type="BioGRID" id="123295">
    <property type="interactions" value="16"/>
</dbReference>
<dbReference type="FunCoup" id="Q9BT76">
    <property type="interactions" value="62"/>
</dbReference>
<dbReference type="IntAct" id="Q9BT76">
    <property type="interactions" value="13"/>
</dbReference>
<dbReference type="MINT" id="Q9BT76"/>
<dbReference type="TCDB" id="8.A.90.2.2">
    <property type="family name" value="the uroplakin 2/3 (upk2/3) family"/>
</dbReference>
<dbReference type="GlyCosmos" id="Q9BT76">
    <property type="glycosylation" value="1 site, No reported glycans"/>
</dbReference>
<dbReference type="GlyGen" id="Q9BT76">
    <property type="glycosylation" value="2 sites"/>
</dbReference>
<dbReference type="iPTMnet" id="Q9BT76"/>
<dbReference type="PhosphoSitePlus" id="Q9BT76"/>
<dbReference type="BioMuta" id="UPK3B"/>
<dbReference type="MassIVE" id="Q9BT76"/>
<dbReference type="PaxDb" id="9606-ENSP00000257632"/>
<dbReference type="PeptideAtlas" id="Q9BT76"/>
<dbReference type="ProteomicsDB" id="1200"/>
<dbReference type="ProteomicsDB" id="78956">
    <molecule id="Q9BT76-1"/>
</dbReference>
<dbReference type="ProteomicsDB" id="78957">
    <molecule id="Q9BT76-2"/>
</dbReference>
<dbReference type="Antibodypedia" id="34816">
    <property type="antibodies" value="125 antibodies from 23 providers"/>
</dbReference>
<dbReference type="DNASU" id="80761"/>
<dbReference type="Ensembl" id="ENST00000257632.9">
    <molecule id="Q9BT76-1"/>
    <property type="protein sequence ID" value="ENSP00000257632.5"/>
    <property type="gene ID" value="ENSG00000243566.7"/>
</dbReference>
<dbReference type="Ensembl" id="ENST00000334348.8">
    <molecule id="Q9BT76-3"/>
    <property type="protein sequence ID" value="ENSP00000334938.3"/>
    <property type="gene ID" value="ENSG00000243566.7"/>
</dbReference>
<dbReference type="Ensembl" id="ENST00000394849.1">
    <molecule id="Q9BT76-2"/>
    <property type="protein sequence ID" value="ENSP00000378319.1"/>
    <property type="gene ID" value="ENSG00000243566.7"/>
</dbReference>
<dbReference type="Ensembl" id="ENST00000448265.7">
    <property type="protein sequence ID" value="ENSP00000441284.2"/>
    <property type="gene ID" value="ENSG00000276184.4"/>
</dbReference>
<dbReference type="Ensembl" id="ENST00000615976.2">
    <property type="protein sequence ID" value="ENSP00000479568.1"/>
    <property type="gene ID" value="ENSG00000276184.4"/>
</dbReference>
<dbReference type="GeneID" id="105375355"/>
<dbReference type="KEGG" id="hsa:105375355"/>
<dbReference type="MANE-Select" id="ENST00000334348.8">
    <molecule id="Q9BT76-3"/>
    <property type="protein sequence ID" value="ENSP00000334938.3"/>
    <property type="RefSeq nucleotide sequence ID" value="NM_001347684.2"/>
    <property type="RefSeq protein sequence ID" value="NP_001334613.1"/>
</dbReference>
<dbReference type="UCSC" id="uc033ayx.2">
    <molecule id="Q9BT76-1"/>
    <property type="organism name" value="human"/>
</dbReference>
<dbReference type="AGR" id="HGNC:21444"/>
<dbReference type="CTD" id="105375355"/>
<dbReference type="DisGeNET" id="105375355"/>
<dbReference type="GeneCards" id="UPK3B"/>
<dbReference type="HGNC" id="HGNC:21444">
    <property type="gene designation" value="UPK3B"/>
</dbReference>
<dbReference type="HPA" id="ENSG00000243566">
    <property type="expression patterns" value="Group enriched (adipose tissue, esophagus, lung, urinary bladder)"/>
</dbReference>
<dbReference type="MIM" id="611887">
    <property type="type" value="gene"/>
</dbReference>
<dbReference type="neXtProt" id="NX_Q9BT76"/>
<dbReference type="OpenTargets" id="ENSG00000243566"/>
<dbReference type="PharmGKB" id="PA134952181"/>
<dbReference type="VEuPathDB" id="HostDB:ENSG00000243566"/>
<dbReference type="eggNOG" id="ENOG502RZJD">
    <property type="taxonomic scope" value="Eukaryota"/>
</dbReference>
<dbReference type="GeneTree" id="ENSGT00940000153392"/>
<dbReference type="HOGENOM" id="CLU_082608_0_0_1"/>
<dbReference type="InParanoid" id="Q9BT76"/>
<dbReference type="OMA" id="HFSSLWW"/>
<dbReference type="OrthoDB" id="9939598at2759"/>
<dbReference type="PAN-GO" id="Q9BT76">
    <property type="GO annotations" value="1 GO annotation based on evolutionary models"/>
</dbReference>
<dbReference type="PhylomeDB" id="Q9BT76"/>
<dbReference type="TreeFam" id="TF336628"/>
<dbReference type="PathwayCommons" id="Q9BT76"/>
<dbReference type="SignaLink" id="Q9BT76"/>
<dbReference type="BioGRID-ORCS" id="105375355">
    <property type="hits" value="15 hits in 1047 CRISPR screens"/>
</dbReference>
<dbReference type="GenomeRNAi" id="105375355"/>
<dbReference type="Pharos" id="Q9BT76">
    <property type="development level" value="Tbio"/>
</dbReference>
<dbReference type="PRO" id="PR:Q9BT76"/>
<dbReference type="Proteomes" id="UP000005640">
    <property type="component" value="Chromosome 7"/>
</dbReference>
<dbReference type="RNAct" id="Q9BT76">
    <property type="molecule type" value="protein"/>
</dbReference>
<dbReference type="Bgee" id="ENSG00000243566">
    <property type="expression patterns" value="Expressed in lower esophagus mucosa and 91 other cell types or tissues"/>
</dbReference>
<dbReference type="GO" id="GO:0016020">
    <property type="term" value="C:membrane"/>
    <property type="evidence" value="ECO:0000318"/>
    <property type="project" value="GO_Central"/>
</dbReference>
<dbReference type="GO" id="GO:0005886">
    <property type="term" value="C:plasma membrane"/>
    <property type="evidence" value="ECO:0007669"/>
    <property type="project" value="UniProtKB-SubCell"/>
</dbReference>
<dbReference type="GO" id="GO:0010629">
    <property type="term" value="P:negative regulation of gene expression"/>
    <property type="evidence" value="ECO:0000315"/>
    <property type="project" value="UniProtKB"/>
</dbReference>
<dbReference type="InterPro" id="IPR024831">
    <property type="entry name" value="Uroplakin-3"/>
</dbReference>
<dbReference type="PANTHER" id="PTHR15446">
    <property type="entry name" value="UROPLAKIN III"/>
    <property type="match status" value="1"/>
</dbReference>
<dbReference type="PANTHER" id="PTHR15446:SF15">
    <property type="entry name" value="UROPLAKIN-3B"/>
    <property type="match status" value="1"/>
</dbReference>
<evidence type="ECO:0000250" key="1"/>
<evidence type="ECO:0000255" key="2"/>
<evidence type="ECO:0000256" key="3">
    <source>
        <dbReference type="SAM" id="MobiDB-lite"/>
    </source>
</evidence>
<evidence type="ECO:0000269" key="4">
    <source>
    </source>
</evidence>
<evidence type="ECO:0000269" key="5">
    <source>
    </source>
</evidence>
<evidence type="ECO:0000269" key="6">
    <source>
    </source>
</evidence>
<evidence type="ECO:0000303" key="7">
    <source>
    </source>
</evidence>
<evidence type="ECO:0000303" key="8">
    <source>
    </source>
</evidence>
<evidence type="ECO:0000305" key="9"/>
<keyword id="KW-0025">Alternative splicing</keyword>
<keyword id="KW-1003">Cell membrane</keyword>
<keyword id="KW-0325">Glycoprotein</keyword>
<keyword id="KW-0472">Membrane</keyword>
<keyword id="KW-1267">Proteomics identification</keyword>
<keyword id="KW-1185">Reference proteome</keyword>
<keyword id="KW-0732">Signal</keyword>
<keyword id="KW-0812">Transmembrane</keyword>
<keyword id="KW-1133">Transmembrane helix</keyword>
<sequence length="320" mass="33882">MGLPWGQPHLGLQMLLLALNCLRPSLSLGEWGSWMDASSQTQGAGGPAGVIGPWAPAPLRLGEAAPGTPTPVSVAHLLSPVATELVPYTPQITAWDLEGKVTATTFSLEQPRCVFDGLASASDTVWLVVAFSNASRGFQNPETLADIPASPQLLTDGHYMTLPLSPDQLPCGDPMAGSGGAPVLRVGHDHGCHQQPFCNAPLPGPGPYREDPRIHRHLARAAKWQHDRHYLHPLFSGRPPTLGLLGSLYHALLQPVVAGGGPGAAADRLLHGQALHDPPHPTQRGRHTAGGLQAWPGPPPQPQPLAWPLCMGLGEMGRWE</sequence>
<gene>
    <name type="primary">UPK3B</name>
</gene>
<name>UPK3B_HUMAN</name>
<organism>
    <name type="scientific">Homo sapiens</name>
    <name type="common">Human</name>
    <dbReference type="NCBI Taxonomy" id="9606"/>
    <lineage>
        <taxon>Eukaryota</taxon>
        <taxon>Metazoa</taxon>
        <taxon>Chordata</taxon>
        <taxon>Craniata</taxon>
        <taxon>Vertebrata</taxon>
        <taxon>Euteleostomi</taxon>
        <taxon>Mammalia</taxon>
        <taxon>Eutheria</taxon>
        <taxon>Euarchontoglires</taxon>
        <taxon>Primates</taxon>
        <taxon>Haplorrhini</taxon>
        <taxon>Catarrhini</taxon>
        <taxon>Hominidae</taxon>
        <taxon>Homo</taxon>
    </lineage>
</organism>
<feature type="signal peptide" evidence="2">
    <location>
        <begin position="1"/>
        <end position="29"/>
    </location>
</feature>
<feature type="chain" id="PRO_0000022640" description="Uroplakin-3b">
    <location>
        <begin position="30"/>
        <end position="320"/>
    </location>
</feature>
<feature type="topological domain" description="Lumenal" evidence="2">
    <location>
        <begin position="30"/>
        <end position="240"/>
    </location>
</feature>
<feature type="transmembrane region" description="Helical" evidence="2">
    <location>
        <begin position="241"/>
        <end position="266"/>
    </location>
</feature>
<feature type="topological domain" description="Cytoplasmic" evidence="2">
    <location>
        <begin position="267"/>
        <end position="320"/>
    </location>
</feature>
<feature type="region of interest" description="Disordered" evidence="3">
    <location>
        <begin position="273"/>
        <end position="303"/>
    </location>
</feature>
<feature type="glycosylation site" description="N-linked (GlcNAc...) asparagine" evidence="2">
    <location>
        <position position="133"/>
    </location>
</feature>
<feature type="splice variant" id="VSP_037327" description="In isoform 2 and isoform 3." evidence="7 8">
    <location>
        <begin position="29"/>
        <end position="83"/>
    </location>
</feature>
<feature type="splice variant" id="VSP_054295" description="In isoform 3." evidence="9">
    <original>EDPRIHRHLARAAKWQHDRHYLHPLFSGRPPTLGLLGSLYHALLQPVVAGGGPGAAADRLLHGQALHDPPHPTQRGRHTAGGLQAWPGPPPQPQPLAWPLCMGLGEMGRWE</original>
    <variation>VKFLLMDTRGSPRAETKWSDPITLHQGKTPGSIDTWPGRRSGSMIVITSILSSLAGLLLLAFLAASTMRFSSLWWPEEAPEQLRIGSFMGKRYMTHHIPPREAATLPVGCKPGLDPLPSLSP</variation>
    <location>
        <begin position="210"/>
        <end position="320"/>
    </location>
</feature>
<feature type="sequence variant" id="VAR_034561" description="In dbSNP:rs1636632.">
    <original>Q</original>
    <variation>R</variation>
    <location>
        <position position="293"/>
    </location>
</feature>
<feature type="sequence variant" id="VAR_047805" description="In dbSNP:rs1799126." evidence="4 5 6">
    <original>W</original>
    <variation>R</variation>
    <location>
        <position position="319"/>
    </location>
</feature>
<proteinExistence type="evidence at protein level"/>